<keyword id="KW-0067">ATP-binding</keyword>
<keyword id="KW-0140">cGMP</keyword>
<keyword id="KW-0142">cGMP-binding</keyword>
<keyword id="KW-0963">Cytoplasm</keyword>
<keyword id="KW-0256">Endoplasmic reticulum</keyword>
<keyword id="KW-0418">Kinase</keyword>
<keyword id="KW-0460">Magnesium</keyword>
<keyword id="KW-0472">Membrane</keyword>
<keyword id="KW-0479">Metal-binding</keyword>
<keyword id="KW-0547">Nucleotide-binding</keyword>
<keyword id="KW-1185">Reference proteome</keyword>
<keyword id="KW-0723">Serine/threonine-protein kinase</keyword>
<keyword id="KW-0808">Transferase</keyword>
<sequence length="856" mass="97901">MDDDEIIPKKNHPSNERNKKKAILSHEDFTGEDSLMENHLELRDKLTEDIVTIKASLKNNLVCSTLNENEILALSNYMQFFVFKSGDMVIKQGEKGSYFFIINSGKFDVYVNDKKVKTLTKGSSFGEAALIHNTQRSATIKAGTNGTLWGVQRSTFRATLKQLSNRNFNENRSFIDSVSVFDMLTEAQKNMITNACVIQNFKPGETIVKQGDYGDVLYILKDGKATVYINDEEIRVLEKGSYFGERALLYDEPRSATIIAKEVTSCASICRKLLNVVLGNLQVVLFRNIMTEALQQSEIFKQISPDQLNDLADTAIVRDYPANYNILHKDKIKSVKYIIVLEGKVELFLDDESIGILTRGKSFGDQYVLNQKQKFKHTLKSLEVCKIALITESCLADCLGNNNIDASIDYNNKKSIIKKMYIFRYLTDKQCNLLIEAFKTTRYEEGDYIIQEGEVGSRFYIIKAGEVEIVKNNKRLRTLGKNDYFGERALIYDEPRTASVISTVNNLECWYVDKSVFLQIIEGPMLAHLEERIKMQDTKVEMSELLTERIIGRGTFGIVKLVLHEPTKIRYALKCVSKKSIIELNQQNNIKLEREITAENDHPFIIRLVRTFKDSKYFYFLTELVTGGELYDAIRKLGLLSRSQAQFYLGSIILAIEYLHERSIVYRDLKPENILLDKQGYVKLIDFGCAKKIHGRSYTLVGTPHYMAPEVILGKGYGCTVDIWAFGVCLYEFICGPLPFGNDQEDQLEIFRDILTGQLTFPDYVTDTDSINLIKRLLCRLPQGRIGCSINGFKDIKENSFFADFDWDRLAGRLLEPPLISKSETYAEDIDVKQIEQEEEDNANTEIDDENWDIDF</sequence>
<proteinExistence type="evidence at protein level"/>
<dbReference type="EC" id="2.7.11.12" evidence="1"/>
<dbReference type="EMBL" id="LK023125">
    <property type="protein sequence ID" value="VUC56080.1"/>
    <property type="molecule type" value="Genomic_DNA"/>
</dbReference>
<dbReference type="SMR" id="A0A509AKL0"/>
<dbReference type="FunCoup" id="A0A509AKL0">
    <property type="interactions" value="4"/>
</dbReference>
<dbReference type="STRING" id="5823.A0A509AKL0"/>
<dbReference type="VEuPathDB" id="PlasmoDB:PBANKA_1008200"/>
<dbReference type="InParanoid" id="A0A509AKL0"/>
<dbReference type="OMA" id="ESCLADC"/>
<dbReference type="Proteomes" id="UP000074855">
    <property type="component" value="Chromosome 10"/>
</dbReference>
<dbReference type="GO" id="GO:0005952">
    <property type="term" value="C:cAMP-dependent protein kinase complex"/>
    <property type="evidence" value="ECO:0007669"/>
    <property type="project" value="TreeGrafter"/>
</dbReference>
<dbReference type="GO" id="GO:0005789">
    <property type="term" value="C:endoplasmic reticulum membrane"/>
    <property type="evidence" value="ECO:0007669"/>
    <property type="project" value="UniProtKB-SubCell"/>
</dbReference>
<dbReference type="GO" id="GO:0005524">
    <property type="term" value="F:ATP binding"/>
    <property type="evidence" value="ECO:0007669"/>
    <property type="project" value="UniProtKB-KW"/>
</dbReference>
<dbReference type="GO" id="GO:0004691">
    <property type="term" value="F:cAMP-dependent protein kinase activity"/>
    <property type="evidence" value="ECO:0007669"/>
    <property type="project" value="TreeGrafter"/>
</dbReference>
<dbReference type="GO" id="GO:0030553">
    <property type="term" value="F:cGMP binding"/>
    <property type="evidence" value="ECO:0007669"/>
    <property type="project" value="UniProtKB-KW"/>
</dbReference>
<dbReference type="GO" id="GO:0004692">
    <property type="term" value="F:cGMP-dependent protein kinase activity"/>
    <property type="evidence" value="ECO:0007669"/>
    <property type="project" value="UniProtKB-EC"/>
</dbReference>
<dbReference type="GO" id="GO:0046872">
    <property type="term" value="F:metal ion binding"/>
    <property type="evidence" value="ECO:0007669"/>
    <property type="project" value="UniProtKB-KW"/>
</dbReference>
<dbReference type="CDD" id="cd00038">
    <property type="entry name" value="CAP_ED"/>
    <property type="match status" value="4"/>
</dbReference>
<dbReference type="CDD" id="cd05572">
    <property type="entry name" value="STKc_cGK"/>
    <property type="match status" value="1"/>
</dbReference>
<dbReference type="FunFam" id="2.60.120.10:FF:000068">
    <property type="entry name" value="cGMP-dependent protein kinase"/>
    <property type="match status" value="1"/>
</dbReference>
<dbReference type="FunFam" id="1.10.510.10:FF:000571">
    <property type="entry name" value="Maternal embryonic leucine zipper kinase"/>
    <property type="match status" value="1"/>
</dbReference>
<dbReference type="Gene3D" id="2.60.120.10">
    <property type="entry name" value="Jelly Rolls"/>
    <property type="match status" value="4"/>
</dbReference>
<dbReference type="Gene3D" id="3.30.200.20">
    <property type="entry name" value="Phosphorylase Kinase, domain 1"/>
    <property type="match status" value="1"/>
</dbReference>
<dbReference type="Gene3D" id="1.10.510.10">
    <property type="entry name" value="Transferase(Phosphotransferase) domain 1"/>
    <property type="match status" value="1"/>
</dbReference>
<dbReference type="InterPro" id="IPR000961">
    <property type="entry name" value="AGC-kinase_C"/>
</dbReference>
<dbReference type="InterPro" id="IPR002374">
    <property type="entry name" value="cGMP_dep_kinase"/>
</dbReference>
<dbReference type="InterPro" id="IPR018488">
    <property type="entry name" value="cNMP-bd_CS"/>
</dbReference>
<dbReference type="InterPro" id="IPR000595">
    <property type="entry name" value="cNMP-bd_dom"/>
</dbReference>
<dbReference type="InterPro" id="IPR018490">
    <property type="entry name" value="cNMP-bd_dom_sf"/>
</dbReference>
<dbReference type="InterPro" id="IPR011009">
    <property type="entry name" value="Kinase-like_dom_sf"/>
</dbReference>
<dbReference type="InterPro" id="IPR000719">
    <property type="entry name" value="Prot_kinase_dom"/>
</dbReference>
<dbReference type="InterPro" id="IPR017441">
    <property type="entry name" value="Protein_kinase_ATP_BS"/>
</dbReference>
<dbReference type="InterPro" id="IPR014710">
    <property type="entry name" value="RmlC-like_jellyroll"/>
</dbReference>
<dbReference type="InterPro" id="IPR008271">
    <property type="entry name" value="Ser/Thr_kinase_AS"/>
</dbReference>
<dbReference type="InterPro" id="IPR035014">
    <property type="entry name" value="STKc_cGK"/>
</dbReference>
<dbReference type="PANTHER" id="PTHR24353:SF37">
    <property type="entry name" value="CAMP-DEPENDENT PROTEIN KINASE CATALYTIC SUBUNIT PRKX"/>
    <property type="match status" value="1"/>
</dbReference>
<dbReference type="PANTHER" id="PTHR24353">
    <property type="entry name" value="CYCLIC NUCLEOTIDE-DEPENDENT PROTEIN KINASE"/>
    <property type="match status" value="1"/>
</dbReference>
<dbReference type="Pfam" id="PF00027">
    <property type="entry name" value="cNMP_binding"/>
    <property type="match status" value="3"/>
</dbReference>
<dbReference type="Pfam" id="PF00069">
    <property type="entry name" value="Pkinase"/>
    <property type="match status" value="1"/>
</dbReference>
<dbReference type="PIRSF" id="PIRSF000559">
    <property type="entry name" value="cGMP-dep_kinase"/>
    <property type="match status" value="1"/>
</dbReference>
<dbReference type="PRINTS" id="PR00103">
    <property type="entry name" value="CAMPKINASE"/>
</dbReference>
<dbReference type="SMART" id="SM00100">
    <property type="entry name" value="cNMP"/>
    <property type="match status" value="4"/>
</dbReference>
<dbReference type="SMART" id="SM00220">
    <property type="entry name" value="S_TKc"/>
    <property type="match status" value="1"/>
</dbReference>
<dbReference type="SUPFAM" id="SSF51206">
    <property type="entry name" value="cAMP-binding domain-like"/>
    <property type="match status" value="4"/>
</dbReference>
<dbReference type="SUPFAM" id="SSF56112">
    <property type="entry name" value="Protein kinase-like (PK-like)"/>
    <property type="match status" value="1"/>
</dbReference>
<dbReference type="PROSITE" id="PS51285">
    <property type="entry name" value="AGC_KINASE_CTER"/>
    <property type="match status" value="1"/>
</dbReference>
<dbReference type="PROSITE" id="PS00888">
    <property type="entry name" value="CNMP_BINDING_1"/>
    <property type="match status" value="3"/>
</dbReference>
<dbReference type="PROSITE" id="PS00889">
    <property type="entry name" value="CNMP_BINDING_2"/>
    <property type="match status" value="3"/>
</dbReference>
<dbReference type="PROSITE" id="PS50042">
    <property type="entry name" value="CNMP_BINDING_3"/>
    <property type="match status" value="4"/>
</dbReference>
<dbReference type="PROSITE" id="PS00107">
    <property type="entry name" value="PROTEIN_KINASE_ATP"/>
    <property type="match status" value="1"/>
</dbReference>
<dbReference type="PROSITE" id="PS50011">
    <property type="entry name" value="PROTEIN_KINASE_DOM"/>
    <property type="match status" value="1"/>
</dbReference>
<dbReference type="PROSITE" id="PS00108">
    <property type="entry name" value="PROTEIN_KINASE_ST"/>
    <property type="match status" value="1"/>
</dbReference>
<comment type="function">
    <text evidence="1 6 7 8 9 10">Serine/threonine protein kinase which acts as a downstream effector of the second messenger cGMP (By similarity). Controls the release of Ca(2+) from intracellular stores by regulating phosphoinositide biosynthesis (PubMed:24594931). Ca(2+) signals are essential for merozoite and sporozoite invasion and egress from host hepatocytes and erythrocytes, and, in the mosquito vector, for gametocyte activation, and ookinete and sporozoite motility (PubMed:24594931). During the host liver stage, regulates the initial invasion of host hepatocytes by sporozoites by regulating sporozoite motility and microneme exocytosis (PubMed:27425827). Following parasite development in the hepatocytes, required for the release of merosomes, a vesicle containing the mature merozoites (PubMed:19940133, PubMed:27425827). During the asexual blood stage, required for the progression from schizont to the ring stage following merozoite invasion of host erythrocytes and for merozoite egress (By similarity). Regulates merozoite egress by promoting the release of exonemes and micronemes which contain proteins essential for egress (By similarity). Phosphorylates CDPK1 predominantly at the late schizont stage; phosphorylation at 'Ser-64' regulates CDPK1 protein-protein interaction and phosphorylation at 'Thr-231' may regulate CDPK1 kinase activity (By similarity). In the mosquito vector, required for the initiation of gametogenesis induced by xanthurenic acid, specifically the gametocyte differentiation from the crescent-shaped form to the spherical form (PubMed:24594931). Required for the gliding motility of ookinetes to reach and penetrate the midgut epithelium by promoting Ca(2+)-mediated activation of CDPK1 and CDPK4 (PubMed:19779564, PubMed:24594931, PubMed:30315162). Also required for microneme secretion in ookinete by promoting Ca(2+)-mediated activation of CDPK3 (PubMed:30315162).</text>
</comment>
<comment type="catalytic activity">
    <reaction evidence="1">
        <text>L-seryl-[protein] + ATP = O-phospho-L-seryl-[protein] + ADP + H(+)</text>
        <dbReference type="Rhea" id="RHEA:17989"/>
        <dbReference type="Rhea" id="RHEA-COMP:9863"/>
        <dbReference type="Rhea" id="RHEA-COMP:11604"/>
        <dbReference type="ChEBI" id="CHEBI:15378"/>
        <dbReference type="ChEBI" id="CHEBI:29999"/>
        <dbReference type="ChEBI" id="CHEBI:30616"/>
        <dbReference type="ChEBI" id="CHEBI:83421"/>
        <dbReference type="ChEBI" id="CHEBI:456216"/>
        <dbReference type="EC" id="2.7.11.12"/>
    </reaction>
</comment>
<comment type="catalytic activity">
    <reaction evidence="1">
        <text>L-threonyl-[protein] + ATP = O-phospho-L-threonyl-[protein] + ADP + H(+)</text>
        <dbReference type="Rhea" id="RHEA:46608"/>
        <dbReference type="Rhea" id="RHEA-COMP:11060"/>
        <dbReference type="Rhea" id="RHEA-COMP:11605"/>
        <dbReference type="ChEBI" id="CHEBI:15378"/>
        <dbReference type="ChEBI" id="CHEBI:30013"/>
        <dbReference type="ChEBI" id="CHEBI:30616"/>
        <dbReference type="ChEBI" id="CHEBI:61977"/>
        <dbReference type="ChEBI" id="CHEBI:456216"/>
        <dbReference type="EC" id="2.7.11.12"/>
    </reaction>
</comment>
<comment type="cofactor">
    <cofactor evidence="1">
        <name>Mg(2+)</name>
        <dbReference type="ChEBI" id="CHEBI:18420"/>
    </cofactor>
</comment>
<comment type="activity regulation">
    <text evidence="1">Activated by cGMP. Not activated by cAMP. cGMP binding allosterically triggers a conformational change at the alpha C-helix of cGMP-binding domain 4, which bridges the regulatory and catalytic domains, causing the capping triad, composed of Arg-488, Gln-536 and Asp-537, to form and stabilize the active conformation. The cGMP-binding domains acts cooperatively to activate PKG.</text>
</comment>
<comment type="subunit">
    <text evidence="1">Monomer.</text>
</comment>
<comment type="subcellular location">
    <subcellularLocation>
        <location evidence="6 9">Cytoplasm</location>
    </subcellularLocation>
    <subcellularLocation>
        <location evidence="1">Endoplasmic reticulum membrane</location>
        <topology evidence="1">Peripheral membrane protein</topology>
        <orientation evidence="1">Cytoplasmic side</orientation>
    </subcellularLocation>
    <text evidence="1">Predominantly localizes to the cytoplasm during schizogony.</text>
</comment>
<comment type="developmental stage">
    <text evidence="6 7 9">Expressed during the parasite blood stage including gametocytes (PubMed:19779564). Expressed in sporozoites (at protein level) (PubMed:27425827). Expressed during the parasite liver stages (at protein level) (PubMed:19940133, PubMed:27425827). In the mosquito host, expressed in the ookinetes (PubMed:19779564).</text>
</comment>
<comment type="domain">
    <text evidence="1">The cNMP-binding domains 1, 2 and 4 bind preferentially cGMP. The cNMP-binding domain 4 binds cGMP with the highest affinity and is highly selective for cGMP. The cNMP-binding domain 3 does not bind cGMP but is required for cGMP-dependent catalytic activity. The cNMP-binding domains 1, 2 and 4 can bind cAMP but with less affinity.</text>
</comment>
<comment type="domain">
    <text evidence="1">The autoinhibitory segment (AIS) interacts with the active site and inhibits catalytic activity.</text>
</comment>
<comment type="PTM">
    <text evidence="1">Autophosphorylated.</text>
</comment>
<comment type="disruption phenotype">
    <text evidence="7 9">Knockout sporozoites can infect their mouse host, however they fail to develop into erythrocyte stage parasite due to impaired late liver stage development (PubMed:19940133). Sporozoites invasion of hepatocytes is normal due to residual expression of PKG (PubMed:27425827). During the liver stage, the development of merozoites is normal but the release of merosomes, a vesicle containing the mature merozoites, is impaired (PubMed:19940133).</text>
</comment>
<comment type="similarity">
    <text evidence="13">Belongs to the protein kinase superfamily. AGC Ser/Thr protein kinase family. cGMP subfamily.</text>
</comment>
<feature type="chain" id="PRO_0000451910" description="cGMP-dependent protein kinase">
    <location>
        <begin position="1"/>
        <end position="856"/>
    </location>
</feature>
<feature type="domain" description="Protein kinase" evidence="3">
    <location>
        <begin position="545"/>
        <end position="802"/>
    </location>
</feature>
<feature type="domain" description="AGC-kinase C-terminal" evidence="4">
    <location>
        <begin position="803"/>
        <end position="856"/>
    </location>
</feature>
<feature type="region of interest" description="Autoinhibitory segment" evidence="1">
    <location>
        <begin position="1"/>
        <end position="33"/>
    </location>
</feature>
<feature type="region of interest" description="cNMP-binding domain 1" evidence="2">
    <location>
        <begin position="62"/>
        <end position="177"/>
    </location>
</feature>
<feature type="region of interest" description="cNMP-binding domain 2" evidence="2">
    <location>
        <begin position="180"/>
        <end position="279"/>
    </location>
</feature>
<feature type="region of interest" description="cNMP-binding domain 3" evidence="2">
    <location>
        <begin position="299"/>
        <end position="402"/>
    </location>
</feature>
<feature type="region of interest" description="cNMP-binding domain 4" evidence="2">
    <location>
        <begin position="422"/>
        <end position="521"/>
    </location>
</feature>
<feature type="region of interest" description="Disordered" evidence="5">
    <location>
        <begin position="837"/>
        <end position="856"/>
    </location>
</feature>
<feature type="active site" description="Proton acceptor" evidence="3">
    <location>
        <position position="668"/>
    </location>
</feature>
<feature type="binding site" evidence="1">
    <location>
        <position position="117"/>
    </location>
    <ligand>
        <name>3',5'-cyclic GMP</name>
        <dbReference type="ChEBI" id="CHEBI:57746"/>
        <label>1</label>
        <note>allosteric activator</note>
    </ligand>
</feature>
<feature type="binding site" evidence="1">
    <location>
        <position position="126"/>
    </location>
    <ligand>
        <name>3',5'-cyclic GMP</name>
        <dbReference type="ChEBI" id="CHEBI:57746"/>
        <label>1</label>
        <note>allosteric activator</note>
    </ligand>
</feature>
<feature type="binding site" evidence="1">
    <location>
        <position position="127"/>
    </location>
    <ligand>
        <name>3',5'-cyclic GMP</name>
        <dbReference type="ChEBI" id="CHEBI:57746"/>
        <label>1</label>
        <note>allosteric activator</note>
    </ligand>
</feature>
<feature type="binding site" evidence="1">
    <location>
        <position position="129"/>
    </location>
    <ligand>
        <name>3',5'-cyclic GMP</name>
        <dbReference type="ChEBI" id="CHEBI:57746"/>
        <label>1</label>
        <note>allosteric activator</note>
    </ligand>
</feature>
<feature type="binding site" evidence="1">
    <location>
        <position position="136"/>
    </location>
    <ligand>
        <name>3',5'-cyclic GMP</name>
        <dbReference type="ChEBI" id="CHEBI:57746"/>
        <label>1</label>
        <note>allosteric activator</note>
    </ligand>
</feature>
<feature type="binding site" evidence="1">
    <location>
        <position position="137"/>
    </location>
    <ligand>
        <name>3',5'-cyclic GMP</name>
        <dbReference type="ChEBI" id="CHEBI:57746"/>
        <label>1</label>
        <note>allosteric activator</note>
    </ligand>
</feature>
<feature type="binding site" evidence="1">
    <location>
        <position position="477"/>
    </location>
    <ligand>
        <name>3',5'-cyclic GMP</name>
        <dbReference type="ChEBI" id="CHEBI:57746"/>
        <label>2</label>
        <note>allosteric activator</note>
    </ligand>
</feature>
<feature type="binding site" evidence="1">
    <location>
        <position position="486"/>
    </location>
    <ligand>
        <name>3',5'-cyclic GMP</name>
        <dbReference type="ChEBI" id="CHEBI:57746"/>
        <label>2</label>
        <note>allosteric activator</note>
    </ligand>
</feature>
<feature type="binding site" evidence="1">
    <location>
        <position position="487"/>
    </location>
    <ligand>
        <name>3',5'-cyclic GMP</name>
        <dbReference type="ChEBI" id="CHEBI:57746"/>
        <label>2</label>
        <note>allosteric activator</note>
    </ligand>
</feature>
<feature type="binding site" evidence="1">
    <location>
        <position position="489"/>
    </location>
    <ligand>
        <name>3',5'-cyclic GMP</name>
        <dbReference type="ChEBI" id="CHEBI:57746"/>
        <label>2</label>
        <note>allosteric activator</note>
    </ligand>
</feature>
<feature type="binding site" evidence="1">
    <location>
        <position position="496"/>
    </location>
    <ligand>
        <name>3',5'-cyclic GMP</name>
        <dbReference type="ChEBI" id="CHEBI:57746"/>
        <label>2</label>
        <note>allosteric activator</note>
    </ligand>
</feature>
<feature type="binding site" evidence="1">
    <location>
        <position position="497"/>
    </location>
    <ligand>
        <name>3',5'-cyclic GMP</name>
        <dbReference type="ChEBI" id="CHEBI:57746"/>
        <label>2</label>
        <note>allosteric activator</note>
    </ligand>
</feature>
<feature type="binding site" evidence="3">
    <location>
        <begin position="551"/>
        <end position="559"/>
    </location>
    <ligand>
        <name>ATP</name>
        <dbReference type="ChEBI" id="CHEBI:30616"/>
    </ligand>
</feature>
<feature type="binding site" evidence="3">
    <location>
        <position position="574"/>
    </location>
    <ligand>
        <name>ATP</name>
        <dbReference type="ChEBI" id="CHEBI:30616"/>
    </ligand>
</feature>
<feature type="site" description="Part of a catalytic triad required for cGMP binding and cGMP-dependent kinase activity" evidence="1">
    <location>
        <position position="488"/>
    </location>
</feature>
<feature type="site" description="Part of a catalytic triad required for cGMP binding and cGMP-dependent kinase activity" evidence="1">
    <location>
        <position position="536"/>
    </location>
</feature>
<feature type="site" description="Part of a catalytic triad required for cGMP binding and cGMP-dependent kinase activity" evidence="1">
    <location>
        <position position="537"/>
    </location>
</feature>
<feature type="mutagenesis site" description="Reduces intracellular Ca(2+) increase in response to cGMP during early gametogenesis. Normal asexual growth rate, gametocyte and ookinete formation, midgut oocyst numbers, salivary gland sporozoite numbers, and sporozoite infectivity to mice. In a CDPK4 knockout background, reduces ring formation and thus the number of schizonts in infected mice. In addition, merozoites have a discontinuous inner membrane complex. Also, male gametocytes fail to exflagellate in the mosquito vector. Resistant to trisubstituted pyrrole compound 1 (C1) and imidazopyridine-based compound 2 (C2) inhibitors." evidence="8 10">
    <original>T</original>
    <variation>Q</variation>
    <location>
        <position position="622"/>
    </location>
</feature>
<organism evidence="15">
    <name type="scientific">Plasmodium berghei (strain Anka)</name>
    <dbReference type="NCBI Taxonomy" id="5823"/>
    <lineage>
        <taxon>Eukaryota</taxon>
        <taxon>Sar</taxon>
        <taxon>Alveolata</taxon>
        <taxon>Apicomplexa</taxon>
        <taxon>Aconoidasida</taxon>
        <taxon>Haemosporida</taxon>
        <taxon>Plasmodiidae</taxon>
        <taxon>Plasmodium</taxon>
        <taxon>Plasmodium (Vinckeia)</taxon>
    </lineage>
</organism>
<name>KGP_PLABA</name>
<protein>
    <recommendedName>
        <fullName evidence="11">cGMP-dependent protein kinase</fullName>
        <ecNumber evidence="1">2.7.11.12</ecNumber>
    </recommendedName>
    <alternativeName>
        <fullName evidence="12">PbPKG</fullName>
    </alternativeName>
</protein>
<accession>A0A509AKL0</accession>
<gene>
    <name evidence="11" type="primary">PKG</name>
    <name evidence="14" type="ORF">PBANKA_1008200</name>
</gene>
<evidence type="ECO:0000250" key="1">
    <source>
        <dbReference type="UniProtKB" id="Q8I719"/>
    </source>
</evidence>
<evidence type="ECO:0000255" key="2">
    <source>
        <dbReference type="PROSITE-ProRule" id="PRU00060"/>
    </source>
</evidence>
<evidence type="ECO:0000255" key="3">
    <source>
        <dbReference type="PROSITE-ProRule" id="PRU00159"/>
    </source>
</evidence>
<evidence type="ECO:0000255" key="4">
    <source>
        <dbReference type="PROSITE-ProRule" id="PRU00618"/>
    </source>
</evidence>
<evidence type="ECO:0000256" key="5">
    <source>
        <dbReference type="SAM" id="MobiDB-lite"/>
    </source>
</evidence>
<evidence type="ECO:0000269" key="6">
    <source>
    </source>
</evidence>
<evidence type="ECO:0000269" key="7">
    <source>
    </source>
</evidence>
<evidence type="ECO:0000269" key="8">
    <source>
    </source>
</evidence>
<evidence type="ECO:0000269" key="9">
    <source>
    </source>
</evidence>
<evidence type="ECO:0000269" key="10">
    <source>
    </source>
</evidence>
<evidence type="ECO:0000303" key="11">
    <source>
    </source>
</evidence>
<evidence type="ECO:0000303" key="12">
    <source>
    </source>
</evidence>
<evidence type="ECO:0000305" key="13"/>
<evidence type="ECO:0000312" key="14">
    <source>
        <dbReference type="EMBL" id="VUC56080.1"/>
    </source>
</evidence>
<evidence type="ECO:0000312" key="15">
    <source>
        <dbReference type="Proteomes" id="UP000074855"/>
    </source>
</evidence>
<reference evidence="15" key="1">
    <citation type="journal article" date="2014" name="BMC Biol.">
        <title>A comprehensive evaluation of rodent malaria parasite genomes and gene expression.</title>
        <authorList>
            <person name="Otto T.D."/>
            <person name="Bohme U."/>
            <person name="Jackson A.P."/>
            <person name="Hunt M."/>
            <person name="Franke-Fayard B."/>
            <person name="Hoeijmakers W.A."/>
            <person name="Religa A.A."/>
            <person name="Robertson L."/>
            <person name="Sanders M."/>
            <person name="Ogun S.A."/>
            <person name="Cunningham D."/>
            <person name="Erhart A."/>
            <person name="Billker O."/>
            <person name="Khan S.M."/>
            <person name="Stunnenberg H.G."/>
            <person name="Langhorne J."/>
            <person name="Holder A.A."/>
            <person name="Waters A.P."/>
            <person name="Newbold C.I."/>
            <person name="Pain A."/>
            <person name="Berriman M."/>
            <person name="Janse C.J."/>
        </authorList>
    </citation>
    <scope>NUCLEOTIDE SEQUENCE [LARGE SCALE GENOMIC DNA]</scope>
    <source>
        <strain evidence="15">ANKA</strain>
    </source>
</reference>
<reference evidence="13" key="2">
    <citation type="journal article" date="2009" name="PLoS Pathog.">
        <title>A cyclic GMP signalling module that regulates gliding motility in a malaria parasite.</title>
        <authorList>
            <person name="Moon R.W."/>
            <person name="Taylor C.J."/>
            <person name="Bex C."/>
            <person name="Schepers R."/>
            <person name="Goulding D."/>
            <person name="Janse C.J."/>
            <person name="Waters A.P."/>
            <person name="Baker D.A."/>
            <person name="Billker O."/>
        </authorList>
    </citation>
    <scope>FUNCTION</scope>
    <scope>SUBCELLULAR LOCATION</scope>
    <scope>DEVELOPMENTAL STAGE</scope>
</reference>
<reference evidence="13" key="3">
    <citation type="journal article" date="2010" name="J. Biol. Chem.">
        <title>Role of Plasmodium berghei cGMP-dependent protein kinase in late liver stage development.</title>
        <authorList>
            <person name="Falae A."/>
            <person name="Combe A."/>
            <person name="Amaladoss A."/>
            <person name="Carvalho T."/>
            <person name="Menard R."/>
            <person name="Bhanot P."/>
        </authorList>
    </citation>
    <scope>FUNCTION</scope>
    <scope>DEVELOPMENTAL STAGE</scope>
    <scope>DISRUPTION PHENOTYPE</scope>
</reference>
<reference evidence="13" key="4">
    <citation type="journal article" date="2014" name="PLoS Biol.">
        <title>Phosphoinositide metabolism links cGMP-dependent protein kinase G to essential Ca(2+) signals at key decision points in the life cycle of malaria parasites.</title>
        <authorList>
            <person name="Brochet M."/>
            <person name="Collins M.O."/>
            <person name="Smith T.K."/>
            <person name="Thompson E."/>
            <person name="Sebastian S."/>
            <person name="Volkmann K."/>
            <person name="Schwach F."/>
            <person name="Chappell L."/>
            <person name="Gomes A.R."/>
            <person name="Berriman M."/>
            <person name="Rayner J.C."/>
            <person name="Baker D.A."/>
            <person name="Choudhary J."/>
            <person name="Billker O."/>
        </authorList>
    </citation>
    <scope>FUNCTION</scope>
    <scope>MUTAGENESIS OF THR-622</scope>
</reference>
<reference evidence="13" key="5">
    <citation type="journal article" date="2016" name="Mol. Microbiol.">
        <title>Invasion of hepatocytes by Plasmodium sporozoites requires cGMP-dependent protein kinase and calcium dependent protein kinase 4.</title>
        <authorList>
            <person name="Govindasamy K."/>
            <person name="Jebiwott S."/>
            <person name="Jaijyan D.K."/>
            <person name="Davidow A."/>
            <person name="Ojo K.K."/>
            <person name="Van Voorhis W.C."/>
            <person name="Brochet M."/>
            <person name="Billker O."/>
            <person name="Bhanot P."/>
        </authorList>
    </citation>
    <scope>FUNCTION</scope>
    <scope>SUBCELLULAR LOCATION</scope>
    <scope>DEVELOPMENTAL STAGE</scope>
    <scope>DISRUPTION PHENOTYPE</scope>
    <scope>MUTAGENESIS OF THR-622</scope>
</reference>
<reference evidence="13" key="6">
    <citation type="journal article" date="2018" name="Nat. Commun.">
        <title>Epistasis studies reveal redundancy among calcium-dependent protein kinases in motility and invasion of malaria parasites.</title>
        <authorList>
            <person name="Fang H."/>
            <person name="Gomes A.R."/>
            <person name="Klages N."/>
            <person name="Pino P."/>
            <person name="Maco B."/>
            <person name="Walker E.M."/>
            <person name="Zenonos Z.A."/>
            <person name="Angrisano F."/>
            <person name="Baum J."/>
            <person name="Doerig C."/>
            <person name="Baker D.A."/>
            <person name="Billker O."/>
            <person name="Brochet M."/>
        </authorList>
    </citation>
    <scope>FUNCTION</scope>
    <scope>MUTAGENESIS OF THR-622</scope>
</reference>